<organism>
    <name type="scientific">Pongo abelii</name>
    <name type="common">Sumatran orangutan</name>
    <name type="synonym">Pongo pygmaeus abelii</name>
    <dbReference type="NCBI Taxonomy" id="9601"/>
    <lineage>
        <taxon>Eukaryota</taxon>
        <taxon>Metazoa</taxon>
        <taxon>Chordata</taxon>
        <taxon>Craniata</taxon>
        <taxon>Vertebrata</taxon>
        <taxon>Euteleostomi</taxon>
        <taxon>Mammalia</taxon>
        <taxon>Eutheria</taxon>
        <taxon>Euarchontoglires</taxon>
        <taxon>Primates</taxon>
        <taxon>Haplorrhini</taxon>
        <taxon>Catarrhini</taxon>
        <taxon>Hominidae</taxon>
        <taxon>Pongo</taxon>
    </lineage>
</organism>
<dbReference type="EMBL" id="CR859398">
    <property type="protein sequence ID" value="CAH91571.1"/>
    <property type="molecule type" value="mRNA"/>
</dbReference>
<dbReference type="RefSeq" id="NP_001125923.1">
    <property type="nucleotide sequence ID" value="NM_001132451.2"/>
</dbReference>
<dbReference type="SMR" id="Q5R9I9"/>
<dbReference type="STRING" id="9601.ENSPPYP00000005320"/>
<dbReference type="GeneID" id="100172857"/>
<dbReference type="KEGG" id="pon:100172857"/>
<dbReference type="CTD" id="4666"/>
<dbReference type="eggNOG" id="KOG2239">
    <property type="taxonomic scope" value="Eukaryota"/>
</dbReference>
<dbReference type="InParanoid" id="Q5R9I9"/>
<dbReference type="OrthoDB" id="3169036at2759"/>
<dbReference type="Proteomes" id="UP000001595">
    <property type="component" value="Unplaced"/>
</dbReference>
<dbReference type="GO" id="GO:0005854">
    <property type="term" value="C:nascent polypeptide-associated complex"/>
    <property type="evidence" value="ECO:0007669"/>
    <property type="project" value="InterPro"/>
</dbReference>
<dbReference type="GO" id="GO:0005634">
    <property type="term" value="C:nucleus"/>
    <property type="evidence" value="ECO:0007669"/>
    <property type="project" value="UniProtKB-SubCell"/>
</dbReference>
<dbReference type="GO" id="GO:0003677">
    <property type="term" value="F:DNA binding"/>
    <property type="evidence" value="ECO:0007669"/>
    <property type="project" value="UniProtKB-KW"/>
</dbReference>
<dbReference type="GO" id="GO:0015031">
    <property type="term" value="P:protein transport"/>
    <property type="evidence" value="ECO:0007669"/>
    <property type="project" value="UniProtKB-KW"/>
</dbReference>
<dbReference type="CDD" id="cd22054">
    <property type="entry name" value="NAC_NACA"/>
    <property type="match status" value="1"/>
</dbReference>
<dbReference type="CDD" id="cd14415">
    <property type="entry name" value="UBA_NACA_NACP1"/>
    <property type="match status" value="1"/>
</dbReference>
<dbReference type="FunFam" id="2.20.70.30:FF:000002">
    <property type="entry name" value="Nascent polypeptide-associated complex (NAC), alpha subunit"/>
    <property type="match status" value="1"/>
</dbReference>
<dbReference type="FunFam" id="1.10.8.10:FF:000006">
    <property type="entry name" value="Putative nascent polypeptide-associated complex subunit alpha"/>
    <property type="match status" value="1"/>
</dbReference>
<dbReference type="Gene3D" id="1.10.8.10">
    <property type="entry name" value="DNA helicase RuvA subunit, C-terminal domain"/>
    <property type="match status" value="1"/>
</dbReference>
<dbReference type="Gene3D" id="2.20.70.30">
    <property type="entry name" value="Nascent polypeptide-associated complex domain"/>
    <property type="match status" value="1"/>
</dbReference>
<dbReference type="InterPro" id="IPR016641">
    <property type="entry name" value="EGD2/NACA0like"/>
</dbReference>
<dbReference type="InterPro" id="IPR044034">
    <property type="entry name" value="NAC-like_UBA"/>
</dbReference>
<dbReference type="InterPro" id="IPR038187">
    <property type="entry name" value="NAC_A/B_dom_sf"/>
</dbReference>
<dbReference type="InterPro" id="IPR002715">
    <property type="entry name" value="Nas_poly-pep-assoc_cplx_dom"/>
</dbReference>
<dbReference type="PANTHER" id="PTHR21713">
    <property type="entry name" value="NASCENT POLYPEPTIDE ASSOCIATED COMPLEX ALPHA SUBUNIT-RELATED"/>
    <property type="match status" value="1"/>
</dbReference>
<dbReference type="Pfam" id="PF01849">
    <property type="entry name" value="NAC"/>
    <property type="match status" value="1"/>
</dbReference>
<dbReference type="Pfam" id="PF19026">
    <property type="entry name" value="UBA_HYPK"/>
    <property type="match status" value="1"/>
</dbReference>
<dbReference type="PIRSF" id="PIRSF015901">
    <property type="entry name" value="NAC_alpha"/>
    <property type="match status" value="1"/>
</dbReference>
<dbReference type="SMART" id="SM01407">
    <property type="entry name" value="NAC"/>
    <property type="match status" value="1"/>
</dbReference>
<dbReference type="PROSITE" id="PS51151">
    <property type="entry name" value="NAC_AB"/>
    <property type="match status" value="1"/>
</dbReference>
<protein>
    <recommendedName>
        <fullName>Nascent polypeptide-associated complex subunit alpha</fullName>
        <shortName>NAC-alpha</shortName>
    </recommendedName>
    <alternativeName>
        <fullName>Alpha-NAC</fullName>
    </alternativeName>
</protein>
<keyword id="KW-0007">Acetylation</keyword>
<keyword id="KW-0143">Chaperone</keyword>
<keyword id="KW-0963">Cytoplasm</keyword>
<keyword id="KW-0238">DNA-binding</keyword>
<keyword id="KW-1017">Isopeptide bond</keyword>
<keyword id="KW-0539">Nucleus</keyword>
<keyword id="KW-0597">Phosphoprotein</keyword>
<keyword id="KW-0653">Protein transport</keyword>
<keyword id="KW-1185">Reference proteome</keyword>
<keyword id="KW-0804">Transcription</keyword>
<keyword id="KW-0813">Transport</keyword>
<keyword id="KW-0832">Ubl conjugation</keyword>
<sequence length="215" mass="23442">MPGEATETVPATEQELPQPQAETGSGTESDSDESVPELEEQDSTQATTQQAQLAAAAEIDEEPVSKAKQSRSEKKARKAMSKLGLRQVTGVTRVTIRKSKNILFVITKPDVYKSPASDTYIVFGEAKIEDLSQQAQLAAAEKFKVQGEAVSNIQENTQTPTVQEESEEEEVDETDVEVKDIELVMSQANVSRAKAVRALKNNSNDIVNAIMELTM</sequence>
<reference key="1">
    <citation type="submission" date="2004-11" db="EMBL/GenBank/DDBJ databases">
        <authorList>
            <consortium name="The German cDNA consortium"/>
        </authorList>
    </citation>
    <scope>NUCLEOTIDE SEQUENCE [LARGE SCALE MRNA]</scope>
    <source>
        <tissue>Heart</tissue>
    </source>
</reference>
<feature type="chain" id="PRO_0000135579" description="Nascent polypeptide-associated complex subunit alpha">
    <location>
        <begin position="1"/>
        <end position="215"/>
    </location>
</feature>
<feature type="domain" description="NAC-A/B" evidence="4">
    <location>
        <begin position="70"/>
        <end position="135"/>
    </location>
</feature>
<feature type="domain" description="UBA">
    <location>
        <begin position="176"/>
        <end position="213"/>
    </location>
</feature>
<feature type="region of interest" description="Disordered" evidence="5">
    <location>
        <begin position="1"/>
        <end position="81"/>
    </location>
</feature>
<feature type="region of interest" description="Required for DNA-binding" evidence="1">
    <location>
        <begin position="69"/>
        <end position="80"/>
    </location>
</feature>
<feature type="region of interest" description="RNA/DNA-binding" evidence="1">
    <location>
        <begin position="93"/>
        <end position="108"/>
    </location>
</feature>
<feature type="compositionally biased region" description="Polar residues" evidence="5">
    <location>
        <begin position="9"/>
        <end position="28"/>
    </location>
</feature>
<feature type="compositionally biased region" description="Acidic residues" evidence="5">
    <location>
        <begin position="29"/>
        <end position="42"/>
    </location>
</feature>
<feature type="compositionally biased region" description="Low complexity" evidence="5">
    <location>
        <begin position="44"/>
        <end position="57"/>
    </location>
</feature>
<feature type="modified residue" description="Phosphoserine; by ILK1" evidence="2">
    <location>
        <position position="43"/>
    </location>
</feature>
<feature type="modified residue" description="Phosphoserine" evidence="2">
    <location>
        <position position="132"/>
    </location>
</feature>
<feature type="modified residue" description="N6-acetyllysine; alternate" evidence="2">
    <location>
        <position position="142"/>
    </location>
</feature>
<feature type="modified residue" description="Phosphothreonine; by GSK3-beta" evidence="3">
    <location>
        <position position="159"/>
    </location>
</feature>
<feature type="modified residue" description="Phosphothreonine" evidence="2">
    <location>
        <position position="161"/>
    </location>
</feature>
<feature type="modified residue" description="Phosphoserine" evidence="2">
    <location>
        <position position="166"/>
    </location>
</feature>
<feature type="modified residue" description="Phosphoserine" evidence="2">
    <location>
        <position position="186"/>
    </location>
</feature>
<feature type="modified residue" description="Phosphoserine" evidence="2">
    <location>
        <position position="191"/>
    </location>
</feature>
<feature type="modified residue" description="Phosphoserine" evidence="2">
    <location>
        <position position="203"/>
    </location>
</feature>
<feature type="cross-link" description="Glycyl lysine isopeptide (Lys-Gly) (interchain with G-Cter in SUMO2); alternate" evidence="2">
    <location>
        <position position="142"/>
    </location>
</feature>
<proteinExistence type="evidence at transcript level"/>
<comment type="function">
    <text evidence="1">Prevents inappropriate targeting of non-secretory polypeptides to the endoplasmic reticulum (ER). Binds to nascent polypeptide chains as they emerge from the ribosome and blocks their interaction with the signal recognition particle (SRP), which normally targets nascent secretory peptides to the ER. Also reduces the inherent affinity of ribosomes for protein translocation sites in the ER membrane (M sites). May act as a specific coactivator for JUN, binding to DNA and stabilizing the interaction of JUN homodimers with target gene promoters (By similarity).</text>
</comment>
<comment type="subunit">
    <text evidence="1">Part of the nascent polypeptide-associated complex (NAC), which is a heterodimer of NACA and BTF3 (via NAC-A/B domains). NAC associates with ribosomes through the BTF3/NACB subunit and contacts the ribosomal protein L23, which is positioned near the exiting site. Both subunits can contact nascent polypeptide chains. NACA may also form homodimers, and only this form binds DNA. Interacts with TBP and JUN (By similarity).</text>
</comment>
<comment type="subcellular location">
    <subcellularLocation>
        <location evidence="1">Cytoplasm</location>
    </subcellularLocation>
    <subcellularLocation>
        <location evidence="1">Nucleus</location>
    </subcellularLocation>
    <text evidence="1">The heterodimer is located mainly in the cytosol, and the homodimer in the nucleus.</text>
</comment>
<comment type="domain">
    <text evidence="1">The positively charged inner surface of the NAC-A/B domain is crucial for NACA localization in the nucleus and DNA-binding. This region is blocked from binding nucleic acids in the heterodimeric complex by a helix region in the beta-subunit, it also displays much higher affinity for RNA than DNA (By similarity).</text>
</comment>
<comment type="PTM">
    <text>Phosphorylation of Ser-43 by ILK during cell adhesion may promote nuclear localization. Phosphorylation of Thr-159 by GSK3B may promote proteasome mediated degradation.</text>
</comment>
<comment type="similarity">
    <text evidence="6">Belongs to the NAC-alpha family.</text>
</comment>
<accession>Q5R9I9</accession>
<name>NACA_PONAB</name>
<gene>
    <name type="primary">NACA</name>
</gene>
<evidence type="ECO:0000250" key="1"/>
<evidence type="ECO:0000250" key="2">
    <source>
        <dbReference type="UniProtKB" id="Q13765"/>
    </source>
</evidence>
<evidence type="ECO:0000250" key="3">
    <source>
        <dbReference type="UniProtKB" id="Q60817"/>
    </source>
</evidence>
<evidence type="ECO:0000255" key="4">
    <source>
        <dbReference type="PROSITE-ProRule" id="PRU00507"/>
    </source>
</evidence>
<evidence type="ECO:0000256" key="5">
    <source>
        <dbReference type="SAM" id="MobiDB-lite"/>
    </source>
</evidence>
<evidence type="ECO:0000305" key="6"/>